<protein>
    <recommendedName>
        <fullName evidence="1">Ribulose bisphosphate carboxylase large chain</fullName>
        <shortName evidence="1">RuBisCO large subunit</shortName>
        <ecNumber evidence="1">4.1.1.39</ecNumber>
    </recommendedName>
</protein>
<accession>P23651</accession>
<evidence type="ECO:0000255" key="1">
    <source>
        <dbReference type="HAMAP-Rule" id="MF_01338"/>
    </source>
</evidence>
<geneLocation type="chloroplast"/>
<gene>
    <name evidence="1" type="primary">rbcL</name>
</gene>
<proteinExistence type="inferred from homology"/>
<dbReference type="EC" id="4.1.1.39" evidence="1"/>
<dbReference type="EMBL" id="X55372">
    <property type="protein sequence ID" value="CAA39051.1"/>
    <property type="molecule type" value="Genomic_DNA"/>
</dbReference>
<dbReference type="PIR" id="S11964">
    <property type="entry name" value="RKPFLL"/>
</dbReference>
<dbReference type="SMR" id="P23651"/>
<dbReference type="GO" id="GO:0009507">
    <property type="term" value="C:chloroplast"/>
    <property type="evidence" value="ECO:0007669"/>
    <property type="project" value="UniProtKB-SubCell"/>
</dbReference>
<dbReference type="GO" id="GO:0000287">
    <property type="term" value="F:magnesium ion binding"/>
    <property type="evidence" value="ECO:0007669"/>
    <property type="project" value="UniProtKB-UniRule"/>
</dbReference>
<dbReference type="GO" id="GO:0004497">
    <property type="term" value="F:monooxygenase activity"/>
    <property type="evidence" value="ECO:0007669"/>
    <property type="project" value="UniProtKB-KW"/>
</dbReference>
<dbReference type="GO" id="GO:0016984">
    <property type="term" value="F:ribulose-bisphosphate carboxylase activity"/>
    <property type="evidence" value="ECO:0007669"/>
    <property type="project" value="UniProtKB-UniRule"/>
</dbReference>
<dbReference type="GO" id="GO:0019253">
    <property type="term" value="P:reductive pentose-phosphate cycle"/>
    <property type="evidence" value="ECO:0007669"/>
    <property type="project" value="UniProtKB-UniRule"/>
</dbReference>
<dbReference type="CDD" id="cd08212">
    <property type="entry name" value="RuBisCO_large_I"/>
    <property type="match status" value="1"/>
</dbReference>
<dbReference type="Gene3D" id="3.20.20.110">
    <property type="entry name" value="Ribulose bisphosphate carboxylase, large subunit, C-terminal domain"/>
    <property type="match status" value="1"/>
</dbReference>
<dbReference type="Gene3D" id="3.30.70.150">
    <property type="entry name" value="RuBisCO large subunit, N-terminal domain"/>
    <property type="match status" value="1"/>
</dbReference>
<dbReference type="HAMAP" id="MF_01338">
    <property type="entry name" value="RuBisCO_L_type1"/>
    <property type="match status" value="1"/>
</dbReference>
<dbReference type="InterPro" id="IPR033966">
    <property type="entry name" value="RuBisCO"/>
</dbReference>
<dbReference type="InterPro" id="IPR020878">
    <property type="entry name" value="RuBisCo_large_chain_AS"/>
</dbReference>
<dbReference type="InterPro" id="IPR000685">
    <property type="entry name" value="RuBisCO_lsu_C"/>
</dbReference>
<dbReference type="InterPro" id="IPR036376">
    <property type="entry name" value="RuBisCO_lsu_C_sf"/>
</dbReference>
<dbReference type="InterPro" id="IPR017443">
    <property type="entry name" value="RuBisCO_lsu_fd_N"/>
</dbReference>
<dbReference type="InterPro" id="IPR036422">
    <property type="entry name" value="RuBisCO_lsu_N_sf"/>
</dbReference>
<dbReference type="InterPro" id="IPR020888">
    <property type="entry name" value="RuBisCO_lsuI"/>
</dbReference>
<dbReference type="NCBIfam" id="NF003252">
    <property type="entry name" value="PRK04208.1"/>
    <property type="match status" value="1"/>
</dbReference>
<dbReference type="PANTHER" id="PTHR42704">
    <property type="entry name" value="RIBULOSE BISPHOSPHATE CARBOXYLASE"/>
    <property type="match status" value="1"/>
</dbReference>
<dbReference type="PANTHER" id="PTHR42704:SF17">
    <property type="entry name" value="RIBULOSE BISPHOSPHATE CARBOXYLASE LARGE CHAIN"/>
    <property type="match status" value="1"/>
</dbReference>
<dbReference type="Pfam" id="PF00016">
    <property type="entry name" value="RuBisCO_large"/>
    <property type="match status" value="1"/>
</dbReference>
<dbReference type="Pfam" id="PF02788">
    <property type="entry name" value="RuBisCO_large_N"/>
    <property type="match status" value="1"/>
</dbReference>
<dbReference type="SFLD" id="SFLDG01052">
    <property type="entry name" value="RuBisCO"/>
    <property type="match status" value="1"/>
</dbReference>
<dbReference type="SFLD" id="SFLDS00014">
    <property type="entry name" value="RuBisCO"/>
    <property type="match status" value="1"/>
</dbReference>
<dbReference type="SFLD" id="SFLDG00301">
    <property type="entry name" value="RuBisCO-like_proteins"/>
    <property type="match status" value="1"/>
</dbReference>
<dbReference type="SUPFAM" id="SSF51649">
    <property type="entry name" value="RuBisCo, C-terminal domain"/>
    <property type="match status" value="1"/>
</dbReference>
<dbReference type="SUPFAM" id="SSF54966">
    <property type="entry name" value="RuBisCO, large subunit, small (N-terminal) domain"/>
    <property type="match status" value="1"/>
</dbReference>
<dbReference type="PROSITE" id="PS00157">
    <property type="entry name" value="RUBISCO_LARGE"/>
    <property type="match status" value="1"/>
</dbReference>
<feature type="chain" id="PRO_0000062579" description="Ribulose bisphosphate carboxylase large chain">
    <location>
        <begin position="1"/>
        <end position="488"/>
    </location>
</feature>
<feature type="active site" description="Proton acceptor" evidence="1">
    <location>
        <position position="179"/>
    </location>
</feature>
<feature type="active site" description="Proton acceptor" evidence="1">
    <location>
        <position position="297"/>
    </location>
</feature>
<feature type="binding site" description="in homodimeric partner" evidence="1">
    <location>
        <position position="127"/>
    </location>
    <ligand>
        <name>substrate</name>
    </ligand>
</feature>
<feature type="binding site" evidence="1">
    <location>
        <position position="177"/>
    </location>
    <ligand>
        <name>substrate</name>
    </ligand>
</feature>
<feature type="binding site" evidence="1">
    <location>
        <position position="181"/>
    </location>
    <ligand>
        <name>substrate</name>
    </ligand>
</feature>
<feature type="binding site" description="via carbamate group" evidence="1">
    <location>
        <position position="205"/>
    </location>
    <ligand>
        <name>Mg(2+)</name>
        <dbReference type="ChEBI" id="CHEBI:18420"/>
    </ligand>
</feature>
<feature type="binding site" evidence="1">
    <location>
        <position position="207"/>
    </location>
    <ligand>
        <name>Mg(2+)</name>
        <dbReference type="ChEBI" id="CHEBI:18420"/>
    </ligand>
</feature>
<feature type="binding site" evidence="1">
    <location>
        <position position="208"/>
    </location>
    <ligand>
        <name>Mg(2+)</name>
        <dbReference type="ChEBI" id="CHEBI:18420"/>
    </ligand>
</feature>
<feature type="binding site" evidence="1">
    <location>
        <position position="298"/>
    </location>
    <ligand>
        <name>substrate</name>
    </ligand>
</feature>
<feature type="binding site" evidence="1">
    <location>
        <position position="330"/>
    </location>
    <ligand>
        <name>substrate</name>
    </ligand>
</feature>
<feature type="binding site" evidence="1">
    <location>
        <position position="382"/>
    </location>
    <ligand>
        <name>substrate</name>
    </ligand>
</feature>
<feature type="site" description="Transition state stabilizer" evidence="1">
    <location>
        <position position="337"/>
    </location>
</feature>
<feature type="modified residue" description="N6-carboxylysine" evidence="1">
    <location>
        <position position="205"/>
    </location>
</feature>
<comment type="function">
    <text evidence="1">RuBisCO catalyzes two reactions: the carboxylation of D-ribulose 1,5-bisphosphate, the primary event in carbon dioxide fixation, as well as the oxidative fragmentation of the pentose substrate in the photorespiration process. Both reactions occur simultaneously and in competition at the same active site.</text>
</comment>
<comment type="catalytic activity">
    <reaction evidence="1">
        <text>2 (2R)-3-phosphoglycerate + 2 H(+) = D-ribulose 1,5-bisphosphate + CO2 + H2O</text>
        <dbReference type="Rhea" id="RHEA:23124"/>
        <dbReference type="ChEBI" id="CHEBI:15377"/>
        <dbReference type="ChEBI" id="CHEBI:15378"/>
        <dbReference type="ChEBI" id="CHEBI:16526"/>
        <dbReference type="ChEBI" id="CHEBI:57870"/>
        <dbReference type="ChEBI" id="CHEBI:58272"/>
        <dbReference type="EC" id="4.1.1.39"/>
    </reaction>
</comment>
<comment type="catalytic activity">
    <reaction evidence="1">
        <text>D-ribulose 1,5-bisphosphate + O2 = 2-phosphoglycolate + (2R)-3-phosphoglycerate + 2 H(+)</text>
        <dbReference type="Rhea" id="RHEA:36631"/>
        <dbReference type="ChEBI" id="CHEBI:15378"/>
        <dbReference type="ChEBI" id="CHEBI:15379"/>
        <dbReference type="ChEBI" id="CHEBI:57870"/>
        <dbReference type="ChEBI" id="CHEBI:58033"/>
        <dbReference type="ChEBI" id="CHEBI:58272"/>
    </reaction>
</comment>
<comment type="cofactor">
    <cofactor evidence="1">
        <name>Mg(2+)</name>
        <dbReference type="ChEBI" id="CHEBI:18420"/>
    </cofactor>
    <text evidence="1">Binds 1 Mg(2+) ion per subunit.</text>
</comment>
<comment type="subunit">
    <text evidence="1">Heterohexadecamer of 8 large chains and 8 small chains.</text>
</comment>
<comment type="subcellular location">
    <subcellularLocation>
        <location>Plastid</location>
        <location>Chloroplast</location>
    </subcellularLocation>
</comment>
<comment type="miscellaneous">
    <text evidence="1">The basic functional RuBisCO is composed of a large chain homodimer in a 'head-to-tail' conformation. In form I RuBisCO this homodimer is arranged in a barrel-like tetramer with the small subunits forming a tetrameric 'cap' on each end of the 'barrel'.</text>
</comment>
<comment type="similarity">
    <text evidence="1">Belongs to the RuBisCO large chain family. Type I subfamily.</text>
</comment>
<name>RBL_PYLLI</name>
<reference key="1">
    <citation type="journal article" date="1990" name="Plant Mol. Biol.">
        <title>Evidence for a composite phylogenetic origin of the plastid genome of the brown alga Pylaiella littoralis (L.) Kjellm.</title>
        <authorList>
            <person name="Assali N.E."/>
            <person name="Mache R."/>
            <person name="Loiseaux-De Goer S."/>
        </authorList>
    </citation>
    <scope>NUCLEOTIDE SEQUENCE [GENOMIC DNA]</scope>
</reference>
<reference key="2">
    <citation type="journal article" date="1991" name="Plant Mol. Biol.">
        <title>Evolution of the Rubisco operon from prokaryotes to algae: structure and analysis of the rbcS gene of the brown alga Pylaiella littoralis.</title>
        <authorList>
            <person name="Assali N.E."/>
            <person name="Martin W.F."/>
            <person name="Sommerville C.C."/>
            <person name="Loiseaux-De Goer S."/>
        </authorList>
    </citation>
    <scope>NUCLEOTIDE SEQUENCE [GENOMIC DNA]</scope>
</reference>
<organism>
    <name type="scientific">Pylaiella littoralis</name>
    <name type="common">Seaweed</name>
    <name type="synonym">Conferva littoralis</name>
    <dbReference type="NCBI Taxonomy" id="2885"/>
    <lineage>
        <taxon>Eukaryota</taxon>
        <taxon>Sar</taxon>
        <taxon>Stramenopiles</taxon>
        <taxon>Ochrophyta</taxon>
        <taxon>PX clade</taxon>
        <taxon>Phaeophyceae</taxon>
        <taxon>Ectocarpales</taxon>
        <taxon>Acinetosporaceae</taxon>
        <taxon>Pylaiella</taxon>
    </lineage>
</organism>
<sequence length="488" mass="54124">MPEDVQNRTRIKSERYESGVIPYAKMGYWDADYNVKDTDILALFRITPQPGVDPVEARAAVAGESSTATWTVVWTDLLTACDIYRAKAYRVDPVPGTSDQFFAYIAYECDLFEEGSLANLTASIIGNVFGFKAVKALRLEDMRIPYAYLKTFQGPATGVVVERERLDKFGRPLLGATVKPKLGLSGKNYGRVVYEGLAGGLDFLKDDENINSQPFMRWKERFLYCMEGVNRAAAATGEVKGSYLNITAATMEQMYERAEYAHSIGSVIVMIDLVIGYTAIQSMAIWARKYEMILHLHRAGNSTYARQKNHGINFRVICKWMRMCGVDHIHAGTVVGKLEGDPLMVKGFYNSLLLTHLKINLAEGLFFDMDWAALRKCVPVASGGIHCGQMHQLLYYLGDDVVLQFGGGTIGHPDGIQSGATANRVALESMVLARNEGRDYVGEGPEILRRAAATCGPLKAALDLWKDITFDYTSTDTPDFVEVATESR</sequence>
<keyword id="KW-0113">Calvin cycle</keyword>
<keyword id="KW-0120">Carbon dioxide fixation</keyword>
<keyword id="KW-0150">Chloroplast</keyword>
<keyword id="KW-0456">Lyase</keyword>
<keyword id="KW-0460">Magnesium</keyword>
<keyword id="KW-0479">Metal-binding</keyword>
<keyword id="KW-0503">Monooxygenase</keyword>
<keyword id="KW-0560">Oxidoreductase</keyword>
<keyword id="KW-0601">Photorespiration</keyword>
<keyword id="KW-0602">Photosynthesis</keyword>
<keyword id="KW-0934">Plastid</keyword>